<proteinExistence type="evidence at protein level"/>
<evidence type="ECO:0000250" key="1"/>
<evidence type="ECO:0000250" key="2">
    <source>
        <dbReference type="UniProtKB" id="P60615"/>
    </source>
</evidence>
<evidence type="ECO:0000269" key="3">
    <source>
    </source>
</evidence>
<evidence type="ECO:0000305" key="4"/>
<dbReference type="PIR" id="A60518">
    <property type="entry name" value="A60518"/>
</dbReference>
<dbReference type="SMR" id="P34073"/>
<dbReference type="GO" id="GO:0005576">
    <property type="term" value="C:extracellular region"/>
    <property type="evidence" value="ECO:0007669"/>
    <property type="project" value="UniProtKB-SubCell"/>
</dbReference>
<dbReference type="GO" id="GO:0030550">
    <property type="term" value="F:acetylcholine receptor inhibitor activity"/>
    <property type="evidence" value="ECO:0007669"/>
    <property type="project" value="UniProtKB-KW"/>
</dbReference>
<dbReference type="GO" id="GO:0099106">
    <property type="term" value="F:ion channel regulator activity"/>
    <property type="evidence" value="ECO:0007669"/>
    <property type="project" value="UniProtKB-KW"/>
</dbReference>
<dbReference type="GO" id="GO:0090729">
    <property type="term" value="F:toxin activity"/>
    <property type="evidence" value="ECO:0007669"/>
    <property type="project" value="UniProtKB-KW"/>
</dbReference>
<dbReference type="CDD" id="cd00206">
    <property type="entry name" value="TFP_snake_toxin"/>
    <property type="match status" value="1"/>
</dbReference>
<dbReference type="Gene3D" id="2.10.60.10">
    <property type="entry name" value="CD59"/>
    <property type="match status" value="1"/>
</dbReference>
<dbReference type="InterPro" id="IPR003571">
    <property type="entry name" value="Snake_3FTx"/>
</dbReference>
<dbReference type="InterPro" id="IPR045860">
    <property type="entry name" value="Snake_toxin-like_sf"/>
</dbReference>
<dbReference type="InterPro" id="IPR018354">
    <property type="entry name" value="Snake_toxin_con_site"/>
</dbReference>
<dbReference type="InterPro" id="IPR054131">
    <property type="entry name" value="Toxin_cobra-type"/>
</dbReference>
<dbReference type="Pfam" id="PF21947">
    <property type="entry name" value="Toxin_cobra-type"/>
    <property type="match status" value="1"/>
</dbReference>
<dbReference type="SUPFAM" id="SSF57302">
    <property type="entry name" value="Snake toxin-like"/>
    <property type="match status" value="1"/>
</dbReference>
<dbReference type="PROSITE" id="PS00272">
    <property type="entry name" value="SNAKE_TOXIN"/>
    <property type="match status" value="1"/>
</dbReference>
<reference key="1">
    <citation type="journal article" date="1990" name="Comp. Biochem. Physiol.">
        <title>The complete amino acid sequence of a post-synaptic neurotoxin isolated from the venom of the Australian death adder snake Acanthophis antarcticus.</title>
        <authorList>
            <person name="Sheumack D.D."/>
            <person name="Spence I."/>
            <person name="Tyler M.I."/>
            <person name="Howden M.E.H."/>
        </authorList>
    </citation>
    <scope>PROTEIN SEQUENCE</scope>
    <scope>SUBCELLULAR LOCATION</scope>
    <source>
        <tissue>Venom</tissue>
    </source>
</reference>
<sequence>VICYRKYTNNVKTCPDGENVCYTKMWCDGFCTSRGKVVELGCAATCPIRKPGNEVKCCSTNKCNHPPKRKKRRP</sequence>
<feature type="chain" id="PRO_0000093528" description="Alpha-elapitoxin-Aa2d">
    <location>
        <begin position="1"/>
        <end position="74"/>
    </location>
</feature>
<feature type="disulfide bond" evidence="1">
    <location>
        <begin position="3"/>
        <end position="21"/>
    </location>
</feature>
<feature type="disulfide bond" evidence="1">
    <location>
        <begin position="14"/>
        <end position="42"/>
    </location>
</feature>
<feature type="disulfide bond" evidence="1">
    <location>
        <begin position="27"/>
        <end position="31"/>
    </location>
</feature>
<feature type="disulfide bond" evidence="1">
    <location>
        <begin position="46"/>
        <end position="57"/>
    </location>
</feature>
<feature type="disulfide bond" evidence="1">
    <location>
        <begin position="58"/>
        <end position="63"/>
    </location>
</feature>
<protein>
    <recommendedName>
        <fullName>Alpha-elapitoxin-Aa2d</fullName>
        <shortName>Alpha-EPTX-Aa2d</shortName>
    </recommendedName>
    <alternativeName>
        <fullName>Acanthophin-D</fullName>
    </alternativeName>
    <alternativeName>
        <fullName>Postsynaptic neurotoxin</fullName>
    </alternativeName>
</protein>
<accession>P34073</accession>
<comment type="function">
    <text evidence="2">Binds with high affinity to muscular (alpha-1/CHRNA1) and neuronal (alpha-7/CHRNA7) nicotinic acetylcholine receptor (nAChR) and inhibits acetylcholine from binding to the receptor, thereby impairing neuromuscular and neuronal transmission.</text>
</comment>
<comment type="subcellular location">
    <subcellularLocation>
        <location evidence="3">Secreted</location>
    </subcellularLocation>
</comment>
<comment type="tissue specificity">
    <text evidence="4">Expressed by the venom gland.</text>
</comment>
<comment type="similarity">
    <text evidence="4">Belongs to the three-finger toxin family. Long-chain subfamily. Type II alpha-neurotoxin sub-subfamily.</text>
</comment>
<keyword id="KW-0008">Acetylcholine receptor inhibiting toxin</keyword>
<keyword id="KW-0903">Direct protein sequencing</keyword>
<keyword id="KW-1015">Disulfide bond</keyword>
<keyword id="KW-0872">Ion channel impairing toxin</keyword>
<keyword id="KW-0528">Neurotoxin</keyword>
<keyword id="KW-0629">Postsynaptic neurotoxin</keyword>
<keyword id="KW-0964">Secreted</keyword>
<keyword id="KW-0800">Toxin</keyword>
<name>3L2D_ACAAN</name>
<organism>
    <name type="scientific">Acanthophis antarcticus</name>
    <name type="common">Common death adder</name>
    <dbReference type="NCBI Taxonomy" id="8605"/>
    <lineage>
        <taxon>Eukaryota</taxon>
        <taxon>Metazoa</taxon>
        <taxon>Chordata</taxon>
        <taxon>Craniata</taxon>
        <taxon>Vertebrata</taxon>
        <taxon>Euteleostomi</taxon>
        <taxon>Lepidosauria</taxon>
        <taxon>Squamata</taxon>
        <taxon>Bifurcata</taxon>
        <taxon>Unidentata</taxon>
        <taxon>Episquamata</taxon>
        <taxon>Toxicofera</taxon>
        <taxon>Serpentes</taxon>
        <taxon>Colubroidea</taxon>
        <taxon>Elapidae</taxon>
        <taxon>Hydrophiinae</taxon>
        <taxon>Acanthophis</taxon>
    </lineage>
</organism>